<evidence type="ECO:0000250" key="1"/>
<evidence type="ECO:0000256" key="2">
    <source>
        <dbReference type="SAM" id="MobiDB-lite"/>
    </source>
</evidence>
<evidence type="ECO:0000269" key="3">
    <source>
    </source>
</evidence>
<evidence type="ECO:0000269" key="4">
    <source>
    </source>
</evidence>
<evidence type="ECO:0000305" key="5"/>
<feature type="chain" id="PRO_0000324753" description="Transcriptional activator protein">
    <location>
        <begin position="1"/>
        <end position="135"/>
    </location>
</feature>
<feature type="zinc finger region" evidence="1">
    <location>
        <begin position="37"/>
        <end position="54"/>
    </location>
</feature>
<feature type="region of interest" description="Disordered" evidence="2">
    <location>
        <begin position="82"/>
        <end position="102"/>
    </location>
</feature>
<feature type="region of interest" description="Transactivation">
    <location>
        <begin position="120"/>
        <end position="135"/>
    </location>
</feature>
<feature type="short sequence motif" description="Nuclear localization signal" evidence="1">
    <location>
        <begin position="17"/>
        <end position="32"/>
    </location>
</feature>
<sequence>MRNSTPSKNHFSPPSIKAQHKVAKKRAIRRSRIDLSCGCSYYIHINCRNYGFSHRGQHHCSSTQEWRLYLGGAKSPLFQDHAAPSNSSRVPDVCDPNTDNVQPRVEESTADAQMLPGSDALPLFDGDFWDDIIDF</sequence>
<keyword id="KW-0010">Activator</keyword>
<keyword id="KW-0238">DNA-binding</keyword>
<keyword id="KW-1035">Host cytoplasm</keyword>
<keyword id="KW-1048">Host nucleus</keyword>
<keyword id="KW-0945">Host-virus interaction</keyword>
<keyword id="KW-1090">Inhibition of host innate immune response by virus</keyword>
<keyword id="KW-0479">Metal-binding</keyword>
<keyword id="KW-0597">Phosphoprotein</keyword>
<keyword id="KW-1185">Reference proteome</keyword>
<keyword id="KW-0941">Suppressor of RNA silencing</keyword>
<keyword id="KW-0899">Viral immunoevasion</keyword>
<keyword id="KW-0862">Zinc</keyword>
<keyword id="KW-0863">Zinc-finger</keyword>
<gene>
    <name type="ORF">AC2</name>
    <name type="ORF">AL2</name>
</gene>
<reference key="1">
    <citation type="journal article" date="2004" name="Arch. Virol.">
        <title>Analysis of an isolate of Mungbean yellow mosaic virus (MYMV) with a highly variable DNA B component.</title>
        <authorList>
            <person name="Karthikeyan A.S."/>
            <person name="Vanitharani R."/>
            <person name="Balaji V."/>
            <person name="Anuradha S."/>
            <person name="Thillaichidambaram P."/>
            <person name="Shivaprasad P.V."/>
            <person name="Parameswari C."/>
            <person name="Balamani V."/>
            <person name="Saminathan M."/>
            <person name="Veluthambi K."/>
        </authorList>
    </citation>
    <scope>NUCLEOTIDE SEQUENCE [GENOMIC DNA]</scope>
</reference>
<reference key="2">
    <citation type="journal article" date="2005" name="J. Virol.">
        <title>Promoters, transcripts, and regulatory proteins of Mungbean yellow mosaic geminivirus.</title>
        <authorList>
            <person name="Shivaprasad P.V."/>
            <person name="Akbergenov R."/>
            <person name="Trinks D."/>
            <person name="Rajeswaran R."/>
            <person name="Veluthambi K."/>
            <person name="Hohn T."/>
            <person name="Pooggin M.M."/>
        </authorList>
    </citation>
    <scope>FUNCTION</scope>
</reference>
<reference key="3">
    <citation type="journal article" date="2005" name="J. Virol.">
        <title>Suppression of RNA silencing by a geminivirus nuclear protein, AC2, correlates with transactivation of host genes.</title>
        <authorList>
            <person name="Trinks D."/>
            <person name="Rajeswaran R."/>
            <person name="Shivaprasad P.V."/>
            <person name="Akbergenov R."/>
            <person name="Oakeley E.J."/>
            <person name="Veluthambi K."/>
            <person name="Hohn T."/>
            <person name="Pooggin M.M."/>
        </authorList>
    </citation>
    <scope>FUNCTION</scope>
    <scope>NUCLEAR LOCALIZATION SIGNAL</scope>
    <scope>TRANSACTIVATION REGION</scope>
    <scope>SUBCELLULAR LOCATION</scope>
</reference>
<accession>Q9YPS3</accession>
<organism>
    <name type="scientific">Mungbean yellow mosaic virus (strain Vigna)</name>
    <name type="common">MYMV</name>
    <dbReference type="NCBI Taxonomy" id="223295"/>
    <lineage>
        <taxon>Viruses</taxon>
        <taxon>Monodnaviria</taxon>
        <taxon>Shotokuvirae</taxon>
        <taxon>Cressdnaviricota</taxon>
        <taxon>Repensiviricetes</taxon>
        <taxon>Geplafuvirales</taxon>
        <taxon>Geminiviridae</taxon>
        <taxon>Begomovirus</taxon>
        <taxon>Mungbean yellow mosaic virus</taxon>
    </lineage>
</organism>
<dbReference type="EMBL" id="AJ132575">
    <property type="protein sequence ID" value="CAA10706.1"/>
    <property type="molecule type" value="Genomic_DNA"/>
</dbReference>
<dbReference type="Proteomes" id="UP000007784">
    <property type="component" value="Genome"/>
</dbReference>
<dbReference type="GO" id="GO:0030430">
    <property type="term" value="C:host cell cytoplasm"/>
    <property type="evidence" value="ECO:0007669"/>
    <property type="project" value="UniProtKB-SubCell"/>
</dbReference>
<dbReference type="GO" id="GO:0042025">
    <property type="term" value="C:host cell nucleus"/>
    <property type="evidence" value="ECO:0007669"/>
    <property type="project" value="UniProtKB-SubCell"/>
</dbReference>
<dbReference type="GO" id="GO:0019028">
    <property type="term" value="C:viral capsid"/>
    <property type="evidence" value="ECO:0007669"/>
    <property type="project" value="InterPro"/>
</dbReference>
<dbReference type="GO" id="GO:0003677">
    <property type="term" value="F:DNA binding"/>
    <property type="evidence" value="ECO:0007669"/>
    <property type="project" value="UniProtKB-KW"/>
</dbReference>
<dbReference type="GO" id="GO:0005198">
    <property type="term" value="F:structural molecule activity"/>
    <property type="evidence" value="ECO:0007669"/>
    <property type="project" value="InterPro"/>
</dbReference>
<dbReference type="GO" id="GO:0008270">
    <property type="term" value="F:zinc ion binding"/>
    <property type="evidence" value="ECO:0007669"/>
    <property type="project" value="UniProtKB-KW"/>
</dbReference>
<dbReference type="GO" id="GO:0052170">
    <property type="term" value="P:symbiont-mediated suppression of host innate immune response"/>
    <property type="evidence" value="ECO:0007669"/>
    <property type="project" value="UniProtKB-KW"/>
</dbReference>
<dbReference type="InterPro" id="IPR000942">
    <property type="entry name" value="Gemini_AL2"/>
</dbReference>
<dbReference type="Pfam" id="PF01440">
    <property type="entry name" value="Gemini_AL2"/>
    <property type="match status" value="1"/>
</dbReference>
<dbReference type="PRINTS" id="PR00230">
    <property type="entry name" value="GEMCOATAL2"/>
</dbReference>
<protein>
    <recommendedName>
        <fullName>Transcriptional activator protein</fullName>
        <shortName>TrAP</shortName>
    </recommendedName>
    <alternativeName>
        <fullName>Protein AC2</fullName>
    </alternativeName>
    <alternativeName>
        <fullName>Protein AL2</fullName>
    </alternativeName>
</protein>
<organismHost>
    <name type="scientific">Glycine max</name>
    <name type="common">Soybean</name>
    <name type="synonym">Glycine hispida</name>
    <dbReference type="NCBI Taxonomy" id="3847"/>
</organismHost>
<organismHost>
    <name type="scientific">Vigna mungo</name>
    <name type="common">Black gram</name>
    <name type="synonym">Phaseolus mungo</name>
    <dbReference type="NCBI Taxonomy" id="3915"/>
</organismHost>
<organismHost>
    <name type="scientific">Vigna radiata</name>
    <name type="common">Mung bean</name>
    <dbReference type="NCBI Taxonomy" id="157791"/>
</organismHost>
<organismHost>
    <name type="scientific">Vigna radiata var. radiata</name>
    <name type="common">Mung bean</name>
    <name type="synonym">Phaseolus aureus</name>
    <dbReference type="NCBI Taxonomy" id="3916"/>
</organismHost>
<organismHost>
    <name type="scientific">Vigna unguiculata</name>
    <name type="common">Cowpea</name>
    <dbReference type="NCBI Taxonomy" id="3917"/>
</organismHost>
<proteinExistence type="inferred from homology"/>
<comment type="function">
    <text evidence="1 3 4">Strong activator of the late viral genes promoters. Enhances the expression of the capsid protein and nuclear shuttle protein. Acts as a suppressor of RNA-mediated gene silencing, also known as post-transcriptional gene silencing (PTGS), a mechanism of plant viral defense that limits the accumulation of viral RNAs. Suppresses the host RNA silencing by inhibiting adenosine kinase 2 (ADK2), a kinase involved in a general methylation pathway. Also suppresses the host basal defense by interacting with and inhibiting SNF1 kinase, a key regulator of cell metabolism implicated in innate antiviral defense. Determines pathogenicity (By similarity).</text>
</comment>
<comment type="subunit">
    <text evidence="1">Monomer. Homodimer. Homooligomer. Self-interaction correlates with nuclear localization and efficient activation of transcription. Monomers suppress local silencing by interacting with and inactivating host adenosine kinase 2 (ADK2) in the cytoplasm. Interacts with and inhibits host SNF1 kinase. Binds to ssDNA (By similarity).</text>
</comment>
<comment type="subcellular location">
    <subcellularLocation>
        <location evidence="3">Host nucleus</location>
    </subcellularLocation>
    <subcellularLocation>
        <location evidence="1">Host cytoplasm</location>
    </subcellularLocation>
    <text evidence="1">The phosphorylated form appears to accumulate almost exclusively in the nucleus, whereas the non-phosphorylated form is found in both nucleus and cytoplasm.</text>
</comment>
<comment type="domain">
    <text evidence="1">The zinc finger and the transactivation region are involved in PTGS suppression.</text>
</comment>
<comment type="PTM">
    <text evidence="1">Phosphorylated.</text>
</comment>
<comment type="similarity">
    <text evidence="5">Belongs to the geminiviridae transcriptional activator protein family.</text>
</comment>
<name>TRAP_MYMVV</name>